<geneLocation type="mitochondrion"/>
<keyword id="KW-0249">Electron transport</keyword>
<keyword id="KW-0472">Membrane</keyword>
<keyword id="KW-0496">Mitochondrion</keyword>
<keyword id="KW-0520">NAD</keyword>
<keyword id="KW-1185">Reference proteome</keyword>
<keyword id="KW-0679">Respiratory chain</keyword>
<keyword id="KW-1278">Translocase</keyword>
<keyword id="KW-0812">Transmembrane</keyword>
<keyword id="KW-1133">Transmembrane helix</keyword>
<keyword id="KW-0813">Transport</keyword>
<keyword id="KW-0830">Ubiquinone</keyword>
<proteinExistence type="inferred from homology"/>
<organism>
    <name type="scientific">Dictyostelium discoideum</name>
    <name type="common">Social amoeba</name>
    <dbReference type="NCBI Taxonomy" id="44689"/>
    <lineage>
        <taxon>Eukaryota</taxon>
        <taxon>Amoebozoa</taxon>
        <taxon>Evosea</taxon>
        <taxon>Eumycetozoa</taxon>
        <taxon>Dictyostelia</taxon>
        <taxon>Dictyosteliales</taxon>
        <taxon>Dictyosteliaceae</taxon>
        <taxon>Dictyostelium</taxon>
    </lineage>
</organism>
<gene>
    <name type="primary">nad3</name>
    <name type="ORF">DDB_G0294022</name>
</gene>
<comment type="function">
    <text evidence="1">Core subunit of the mitochondrial membrane respiratory chain NADH dehydrogenase (Complex I) that is believed to belong to the minimal assembly required for catalysis. Complex I functions in the transfer of electrons from NADH to the respiratory chain. The immediate electron acceptor for the enzyme is believed to be ubiquinone (By similarity).</text>
</comment>
<comment type="catalytic activity">
    <reaction>
        <text>a ubiquinone + NADH + 5 H(+)(in) = a ubiquinol + NAD(+) + 4 H(+)(out)</text>
        <dbReference type="Rhea" id="RHEA:29091"/>
        <dbReference type="Rhea" id="RHEA-COMP:9565"/>
        <dbReference type="Rhea" id="RHEA-COMP:9566"/>
        <dbReference type="ChEBI" id="CHEBI:15378"/>
        <dbReference type="ChEBI" id="CHEBI:16389"/>
        <dbReference type="ChEBI" id="CHEBI:17976"/>
        <dbReference type="ChEBI" id="CHEBI:57540"/>
        <dbReference type="ChEBI" id="CHEBI:57945"/>
        <dbReference type="EC" id="7.1.1.2"/>
    </reaction>
</comment>
<comment type="subcellular location">
    <subcellularLocation>
        <location evidence="1">Mitochondrion membrane</location>
        <topology evidence="1">Multi-pass membrane protein</topology>
    </subcellularLocation>
</comment>
<comment type="similarity">
    <text evidence="3">Belongs to the complex I subunit 3 family.</text>
</comment>
<sequence length="120" mass="13835">MGVTFEFVYILVLLAISTGLSVILFFLGYFLMFKVAYEDKLMGYECGFDPFGNARGEFDIRFYLVAILFLIFDLEITFLFPFSVSIMSMTLLSYSLMLIFLIILTIGFIYEIKKGALDWS</sequence>
<dbReference type="EC" id="7.1.1.2"/>
<dbReference type="EMBL" id="D16466">
    <property type="protein sequence ID" value="BAA03934.1"/>
    <property type="molecule type" value="Genomic_DNA"/>
</dbReference>
<dbReference type="EMBL" id="AB000109">
    <property type="protein sequence ID" value="BAA78062.1"/>
    <property type="molecule type" value="Genomic_DNA"/>
</dbReference>
<dbReference type="PIR" id="S68156">
    <property type="entry name" value="S68156"/>
</dbReference>
<dbReference type="RefSeq" id="NP_050080.1">
    <property type="nucleotide sequence ID" value="NC_000895.1"/>
</dbReference>
<dbReference type="SMR" id="Q37312"/>
<dbReference type="FunCoup" id="Q37312">
    <property type="interactions" value="10"/>
</dbReference>
<dbReference type="STRING" id="44689.Q37312"/>
<dbReference type="GeneID" id="2193900"/>
<dbReference type="KEGG" id="ddi:DidioMp13"/>
<dbReference type="dictyBase" id="DDB_G0294022">
    <property type="gene designation" value="nad3"/>
</dbReference>
<dbReference type="VEuPathDB" id="AmoebaDB:DidioMp13"/>
<dbReference type="InParanoid" id="Q37312"/>
<dbReference type="OMA" id="GPRRYNR"/>
<dbReference type="PhylomeDB" id="Q37312"/>
<dbReference type="PRO" id="PR:Q37312"/>
<dbReference type="Proteomes" id="UP000002195">
    <property type="component" value="Mitochondrion"/>
</dbReference>
<dbReference type="GO" id="GO:0031966">
    <property type="term" value="C:mitochondrial membrane"/>
    <property type="evidence" value="ECO:0007669"/>
    <property type="project" value="UniProtKB-SubCell"/>
</dbReference>
<dbReference type="GO" id="GO:0045271">
    <property type="term" value="C:respiratory chain complex I"/>
    <property type="evidence" value="ECO:0000318"/>
    <property type="project" value="GO_Central"/>
</dbReference>
<dbReference type="GO" id="GO:0008137">
    <property type="term" value="F:NADH dehydrogenase (ubiquinone) activity"/>
    <property type="evidence" value="ECO:0000318"/>
    <property type="project" value="GO_Central"/>
</dbReference>
<dbReference type="FunFam" id="1.20.58.1610:FF:000004">
    <property type="entry name" value="NADH-quinone oxidoreductase subunit A"/>
    <property type="match status" value="1"/>
</dbReference>
<dbReference type="Gene3D" id="1.20.58.1610">
    <property type="entry name" value="NADH:ubiquinone/plastoquinone oxidoreductase, chain 3"/>
    <property type="match status" value="1"/>
</dbReference>
<dbReference type="HAMAP" id="MF_01394">
    <property type="entry name" value="NDH1_NuoA"/>
    <property type="match status" value="1"/>
</dbReference>
<dbReference type="InterPro" id="IPR023043">
    <property type="entry name" value="NAD(P)H_OxRDtase_bac/plastid"/>
</dbReference>
<dbReference type="InterPro" id="IPR000440">
    <property type="entry name" value="NADH_UbQ/plastoQ_OxRdtase_su3"/>
</dbReference>
<dbReference type="InterPro" id="IPR038430">
    <property type="entry name" value="NDAH_ubi_oxred_su3_sf"/>
</dbReference>
<dbReference type="PANTHER" id="PTHR11058">
    <property type="entry name" value="NADH-UBIQUINONE OXIDOREDUCTASE CHAIN 3"/>
    <property type="match status" value="1"/>
</dbReference>
<dbReference type="PANTHER" id="PTHR11058:SF9">
    <property type="entry name" value="NADH-UBIQUINONE OXIDOREDUCTASE CHAIN 3"/>
    <property type="match status" value="1"/>
</dbReference>
<dbReference type="Pfam" id="PF00507">
    <property type="entry name" value="Oxidored_q4"/>
    <property type="match status" value="1"/>
</dbReference>
<protein>
    <recommendedName>
        <fullName>NADH-ubiquinone oxidoreductase chain 3</fullName>
        <ecNumber>7.1.1.2</ecNumber>
    </recommendedName>
    <alternativeName>
        <fullName>NADH dehydrogenase subunit 3</fullName>
    </alternativeName>
</protein>
<reference key="1">
    <citation type="journal article" date="1995" name="Curr. Genet.">
        <title>Codon usage, genetic code and phylogeny of Dictyostelium discoideum mitochondrial DNA as deduced from a 7.3-kb region.</title>
        <authorList>
            <person name="Angata K."/>
            <person name="Kuroe K."/>
            <person name="Yanagisawa K."/>
            <person name="Tanaka Y."/>
        </authorList>
    </citation>
    <scope>NUCLEOTIDE SEQUENCE [GENOMIC DNA]</scope>
    <source>
        <strain>AX3</strain>
    </source>
</reference>
<reference key="2">
    <citation type="journal article" date="2000" name="Mol. Gen. Genet.">
        <title>The mitochondrial DNA of Dictyostelium discoideum: complete sequence, gene content and genome organization.</title>
        <authorList>
            <person name="Ogawa S."/>
            <person name="Yoshino R."/>
            <person name="Angata K."/>
            <person name="Iwamoto M."/>
            <person name="Pi M."/>
            <person name="Kuroe K."/>
            <person name="Matsuo K."/>
            <person name="Morio T."/>
            <person name="Urushihara H."/>
            <person name="Yanagisawa K."/>
            <person name="Tanaka Y."/>
        </authorList>
    </citation>
    <scope>NUCLEOTIDE SEQUENCE [LARGE SCALE GENOMIC DNA]</scope>
    <source>
        <strain>AX3</strain>
    </source>
</reference>
<accession>Q37312</accession>
<name>NU3M_DICDI</name>
<feature type="chain" id="PRO_0000117733" description="NADH-ubiquinone oxidoreductase chain 3">
    <location>
        <begin position="1"/>
        <end position="120"/>
    </location>
</feature>
<feature type="transmembrane region" description="Helical" evidence="2">
    <location>
        <begin position="7"/>
        <end position="27"/>
    </location>
</feature>
<feature type="transmembrane region" description="Helical" evidence="2">
    <location>
        <begin position="62"/>
        <end position="82"/>
    </location>
</feature>
<feature type="transmembrane region" description="Helical" evidence="2">
    <location>
        <begin position="89"/>
        <end position="109"/>
    </location>
</feature>
<evidence type="ECO:0000250" key="1"/>
<evidence type="ECO:0000255" key="2"/>
<evidence type="ECO:0000305" key="3"/>